<feature type="chain" id="PRO_0000215080" description="PF03932 family protein CutC">
    <location>
        <begin position="1"/>
        <end position="250"/>
    </location>
</feature>
<comment type="subcellular location">
    <subcellularLocation>
        <location evidence="1">Cytoplasm</location>
    </subcellularLocation>
</comment>
<comment type="similarity">
    <text evidence="1">Belongs to the CutC family.</text>
</comment>
<comment type="caution">
    <text evidence="1">Once thought to be involved in copper homeostasis, experiments in E.coli have shown this is not the case.</text>
</comment>
<reference key="1">
    <citation type="submission" date="2002-12" db="EMBL/GenBank/DDBJ databases">
        <title>Complete genome sequence of Vibrio vulnificus CMCP6.</title>
        <authorList>
            <person name="Rhee J.H."/>
            <person name="Kim S.Y."/>
            <person name="Chung S.S."/>
            <person name="Kim J.J."/>
            <person name="Moon Y.H."/>
            <person name="Jeong H."/>
            <person name="Choy H.E."/>
        </authorList>
    </citation>
    <scope>NUCLEOTIDE SEQUENCE [LARGE SCALE GENOMIC DNA]</scope>
    <source>
        <strain>CMCP6</strain>
    </source>
</reference>
<sequence>MSYQVEVCIDNIESLHNALEGGATRIELCSSLALGGLTPSYGFMTLAAKLSTVPIYAMIRPRQGDFLYSDDEFAIMQQDILSAQQAGLQGVVFGLLTADGDIDVARTRILVELAHSLQLGVTFHRAFDQCREPFAALEQIIDLGCERILTSGLAASAPLGKEILTQLVAHSQSRLAIMAGAGVSPVNVADLALTTGVKEVHLSGKSTRPSKMTFIASDSKMGAADQDDFIIPITHTATIRNTVLALKSIS</sequence>
<dbReference type="EMBL" id="AE016795">
    <property type="protein sequence ID" value="AAO08976.1"/>
    <property type="molecule type" value="Genomic_DNA"/>
</dbReference>
<dbReference type="RefSeq" id="WP_011078552.1">
    <property type="nucleotide sequence ID" value="NC_004459.3"/>
</dbReference>
<dbReference type="SMR" id="Q8DEX2"/>
<dbReference type="KEGG" id="vvu:VV1_0454"/>
<dbReference type="HOGENOM" id="CLU_050555_3_1_6"/>
<dbReference type="Proteomes" id="UP000002275">
    <property type="component" value="Chromosome 1"/>
</dbReference>
<dbReference type="GO" id="GO:0005737">
    <property type="term" value="C:cytoplasm"/>
    <property type="evidence" value="ECO:0007669"/>
    <property type="project" value="UniProtKB-SubCell"/>
</dbReference>
<dbReference type="GO" id="GO:0005507">
    <property type="term" value="F:copper ion binding"/>
    <property type="evidence" value="ECO:0007669"/>
    <property type="project" value="TreeGrafter"/>
</dbReference>
<dbReference type="FunFam" id="3.20.20.380:FF:000001">
    <property type="entry name" value="Copper homeostasis protein CutC"/>
    <property type="match status" value="1"/>
</dbReference>
<dbReference type="Gene3D" id="3.20.20.380">
    <property type="entry name" value="Copper homeostasis (CutC) domain"/>
    <property type="match status" value="1"/>
</dbReference>
<dbReference type="HAMAP" id="MF_00795">
    <property type="entry name" value="CutC"/>
    <property type="match status" value="1"/>
</dbReference>
<dbReference type="InterPro" id="IPR005627">
    <property type="entry name" value="CutC-like"/>
</dbReference>
<dbReference type="InterPro" id="IPR036822">
    <property type="entry name" value="CutC-like_dom_sf"/>
</dbReference>
<dbReference type="PANTHER" id="PTHR12598">
    <property type="entry name" value="COPPER HOMEOSTASIS PROTEIN CUTC"/>
    <property type="match status" value="1"/>
</dbReference>
<dbReference type="PANTHER" id="PTHR12598:SF0">
    <property type="entry name" value="COPPER HOMEOSTASIS PROTEIN CUTC HOMOLOG"/>
    <property type="match status" value="1"/>
</dbReference>
<dbReference type="Pfam" id="PF03932">
    <property type="entry name" value="CutC"/>
    <property type="match status" value="1"/>
</dbReference>
<dbReference type="SUPFAM" id="SSF110395">
    <property type="entry name" value="CutC-like"/>
    <property type="match status" value="1"/>
</dbReference>
<gene>
    <name evidence="1" type="primary">cutC</name>
    <name type="ordered locus">VV1_0454</name>
</gene>
<accession>Q8DEX2</accession>
<keyword id="KW-0963">Cytoplasm</keyword>
<protein>
    <recommendedName>
        <fullName evidence="1">PF03932 family protein CutC</fullName>
    </recommendedName>
</protein>
<evidence type="ECO:0000255" key="1">
    <source>
        <dbReference type="HAMAP-Rule" id="MF_00795"/>
    </source>
</evidence>
<name>CUTC_VIBVU</name>
<proteinExistence type="inferred from homology"/>
<organism>
    <name type="scientific">Vibrio vulnificus (strain CMCP6)</name>
    <dbReference type="NCBI Taxonomy" id="216895"/>
    <lineage>
        <taxon>Bacteria</taxon>
        <taxon>Pseudomonadati</taxon>
        <taxon>Pseudomonadota</taxon>
        <taxon>Gammaproteobacteria</taxon>
        <taxon>Vibrionales</taxon>
        <taxon>Vibrionaceae</taxon>
        <taxon>Vibrio</taxon>
    </lineage>
</organism>